<name>LEPA_PSECP</name>
<feature type="chain" id="PRO_1000118032" description="Elongation factor 4">
    <location>
        <begin position="1"/>
        <end position="618"/>
    </location>
</feature>
<feature type="domain" description="tr-type G">
    <location>
        <begin position="17"/>
        <end position="198"/>
    </location>
</feature>
<feature type="binding site" evidence="1">
    <location>
        <begin position="29"/>
        <end position="34"/>
    </location>
    <ligand>
        <name>GTP</name>
        <dbReference type="ChEBI" id="CHEBI:37565"/>
    </ligand>
</feature>
<feature type="binding site" evidence="1">
    <location>
        <begin position="145"/>
        <end position="148"/>
    </location>
    <ligand>
        <name>GTP</name>
        <dbReference type="ChEBI" id="CHEBI:37565"/>
    </ligand>
</feature>
<accession>B8H8S3</accession>
<evidence type="ECO:0000255" key="1">
    <source>
        <dbReference type="HAMAP-Rule" id="MF_00071"/>
    </source>
</evidence>
<gene>
    <name evidence="1" type="primary">lepA</name>
    <name type="ordered locus">Achl_1977</name>
</gene>
<protein>
    <recommendedName>
        <fullName evidence="1">Elongation factor 4</fullName>
        <shortName evidence="1">EF-4</shortName>
        <ecNumber evidence="1">3.6.5.n1</ecNumber>
    </recommendedName>
    <alternativeName>
        <fullName evidence="1">Ribosomal back-translocase LepA</fullName>
    </alternativeName>
</protein>
<organism>
    <name type="scientific">Pseudarthrobacter chlorophenolicus (strain ATCC 700700 / DSM 12829 / CIP 107037 / JCM 12360 / KCTC 9906 / NCIMB 13794 / A6)</name>
    <name type="common">Arthrobacter chlorophenolicus</name>
    <dbReference type="NCBI Taxonomy" id="452863"/>
    <lineage>
        <taxon>Bacteria</taxon>
        <taxon>Bacillati</taxon>
        <taxon>Actinomycetota</taxon>
        <taxon>Actinomycetes</taxon>
        <taxon>Micrococcales</taxon>
        <taxon>Micrococcaceae</taxon>
        <taxon>Pseudarthrobacter</taxon>
    </lineage>
</organism>
<dbReference type="EC" id="3.6.5.n1" evidence="1"/>
<dbReference type="EMBL" id="CP001341">
    <property type="protein sequence ID" value="ACL39951.1"/>
    <property type="molecule type" value="Genomic_DNA"/>
</dbReference>
<dbReference type="RefSeq" id="WP_015937170.1">
    <property type="nucleotide sequence ID" value="NC_011886.1"/>
</dbReference>
<dbReference type="SMR" id="B8H8S3"/>
<dbReference type="STRING" id="452863.Achl_1977"/>
<dbReference type="KEGG" id="ach:Achl_1977"/>
<dbReference type="eggNOG" id="COG0481">
    <property type="taxonomic scope" value="Bacteria"/>
</dbReference>
<dbReference type="HOGENOM" id="CLU_009995_3_3_11"/>
<dbReference type="Proteomes" id="UP000002505">
    <property type="component" value="Chromosome"/>
</dbReference>
<dbReference type="GO" id="GO:0005886">
    <property type="term" value="C:plasma membrane"/>
    <property type="evidence" value="ECO:0007669"/>
    <property type="project" value="UniProtKB-SubCell"/>
</dbReference>
<dbReference type="GO" id="GO:0005525">
    <property type="term" value="F:GTP binding"/>
    <property type="evidence" value="ECO:0007669"/>
    <property type="project" value="UniProtKB-UniRule"/>
</dbReference>
<dbReference type="GO" id="GO:0003924">
    <property type="term" value="F:GTPase activity"/>
    <property type="evidence" value="ECO:0007669"/>
    <property type="project" value="UniProtKB-UniRule"/>
</dbReference>
<dbReference type="GO" id="GO:0043022">
    <property type="term" value="F:ribosome binding"/>
    <property type="evidence" value="ECO:0007669"/>
    <property type="project" value="UniProtKB-UniRule"/>
</dbReference>
<dbReference type="GO" id="GO:0003746">
    <property type="term" value="F:translation elongation factor activity"/>
    <property type="evidence" value="ECO:0007669"/>
    <property type="project" value="UniProtKB-UniRule"/>
</dbReference>
<dbReference type="GO" id="GO:0045727">
    <property type="term" value="P:positive regulation of translation"/>
    <property type="evidence" value="ECO:0007669"/>
    <property type="project" value="UniProtKB-UniRule"/>
</dbReference>
<dbReference type="CDD" id="cd03699">
    <property type="entry name" value="EF4_II"/>
    <property type="match status" value="1"/>
</dbReference>
<dbReference type="CDD" id="cd16260">
    <property type="entry name" value="EF4_III"/>
    <property type="match status" value="1"/>
</dbReference>
<dbReference type="CDD" id="cd01890">
    <property type="entry name" value="LepA"/>
    <property type="match status" value="1"/>
</dbReference>
<dbReference type="CDD" id="cd03709">
    <property type="entry name" value="lepA_C"/>
    <property type="match status" value="1"/>
</dbReference>
<dbReference type="FunFam" id="3.40.50.300:FF:000078">
    <property type="entry name" value="Elongation factor 4"/>
    <property type="match status" value="1"/>
</dbReference>
<dbReference type="FunFam" id="2.40.30.10:FF:000015">
    <property type="entry name" value="Translation factor GUF1, mitochondrial"/>
    <property type="match status" value="1"/>
</dbReference>
<dbReference type="FunFam" id="3.30.70.240:FF:000007">
    <property type="entry name" value="Translation factor GUF1, mitochondrial"/>
    <property type="match status" value="1"/>
</dbReference>
<dbReference type="FunFam" id="3.30.70.2570:FF:000001">
    <property type="entry name" value="Translation factor GUF1, mitochondrial"/>
    <property type="match status" value="1"/>
</dbReference>
<dbReference type="FunFam" id="3.30.70.870:FF:000004">
    <property type="entry name" value="Translation factor GUF1, mitochondrial"/>
    <property type="match status" value="1"/>
</dbReference>
<dbReference type="Gene3D" id="3.30.70.240">
    <property type="match status" value="1"/>
</dbReference>
<dbReference type="Gene3D" id="3.30.70.2570">
    <property type="entry name" value="Elongation factor 4, C-terminal domain"/>
    <property type="match status" value="1"/>
</dbReference>
<dbReference type="Gene3D" id="3.30.70.870">
    <property type="entry name" value="Elongation Factor G (Translational Gtpase), domain 3"/>
    <property type="match status" value="1"/>
</dbReference>
<dbReference type="Gene3D" id="3.40.50.300">
    <property type="entry name" value="P-loop containing nucleotide triphosphate hydrolases"/>
    <property type="match status" value="1"/>
</dbReference>
<dbReference type="Gene3D" id="2.40.30.10">
    <property type="entry name" value="Translation factors"/>
    <property type="match status" value="1"/>
</dbReference>
<dbReference type="HAMAP" id="MF_00071">
    <property type="entry name" value="LepA"/>
    <property type="match status" value="1"/>
</dbReference>
<dbReference type="InterPro" id="IPR006297">
    <property type="entry name" value="EF-4"/>
</dbReference>
<dbReference type="InterPro" id="IPR035647">
    <property type="entry name" value="EFG_III/V"/>
</dbReference>
<dbReference type="InterPro" id="IPR000640">
    <property type="entry name" value="EFG_V-like"/>
</dbReference>
<dbReference type="InterPro" id="IPR004161">
    <property type="entry name" value="EFTu-like_2"/>
</dbReference>
<dbReference type="InterPro" id="IPR031157">
    <property type="entry name" value="G_TR_CS"/>
</dbReference>
<dbReference type="InterPro" id="IPR038363">
    <property type="entry name" value="LepA_C_sf"/>
</dbReference>
<dbReference type="InterPro" id="IPR013842">
    <property type="entry name" value="LepA_CTD"/>
</dbReference>
<dbReference type="InterPro" id="IPR035654">
    <property type="entry name" value="LepA_IV"/>
</dbReference>
<dbReference type="InterPro" id="IPR027417">
    <property type="entry name" value="P-loop_NTPase"/>
</dbReference>
<dbReference type="InterPro" id="IPR005225">
    <property type="entry name" value="Small_GTP-bd"/>
</dbReference>
<dbReference type="InterPro" id="IPR000795">
    <property type="entry name" value="T_Tr_GTP-bd_dom"/>
</dbReference>
<dbReference type="InterPro" id="IPR009000">
    <property type="entry name" value="Transl_B-barrel_sf"/>
</dbReference>
<dbReference type="NCBIfam" id="TIGR01393">
    <property type="entry name" value="lepA"/>
    <property type="match status" value="1"/>
</dbReference>
<dbReference type="NCBIfam" id="TIGR00231">
    <property type="entry name" value="small_GTP"/>
    <property type="match status" value="1"/>
</dbReference>
<dbReference type="PANTHER" id="PTHR43512:SF4">
    <property type="entry name" value="TRANSLATION FACTOR GUF1 HOMOLOG, CHLOROPLASTIC"/>
    <property type="match status" value="1"/>
</dbReference>
<dbReference type="PANTHER" id="PTHR43512">
    <property type="entry name" value="TRANSLATION FACTOR GUF1-RELATED"/>
    <property type="match status" value="1"/>
</dbReference>
<dbReference type="Pfam" id="PF00679">
    <property type="entry name" value="EFG_C"/>
    <property type="match status" value="1"/>
</dbReference>
<dbReference type="Pfam" id="PF00009">
    <property type="entry name" value="GTP_EFTU"/>
    <property type="match status" value="1"/>
</dbReference>
<dbReference type="Pfam" id="PF03144">
    <property type="entry name" value="GTP_EFTU_D2"/>
    <property type="match status" value="1"/>
</dbReference>
<dbReference type="Pfam" id="PF06421">
    <property type="entry name" value="LepA_C"/>
    <property type="match status" value="1"/>
</dbReference>
<dbReference type="PRINTS" id="PR00315">
    <property type="entry name" value="ELONGATNFCT"/>
</dbReference>
<dbReference type="SMART" id="SM00838">
    <property type="entry name" value="EFG_C"/>
    <property type="match status" value="1"/>
</dbReference>
<dbReference type="SUPFAM" id="SSF54980">
    <property type="entry name" value="EF-G C-terminal domain-like"/>
    <property type="match status" value="2"/>
</dbReference>
<dbReference type="SUPFAM" id="SSF52540">
    <property type="entry name" value="P-loop containing nucleoside triphosphate hydrolases"/>
    <property type="match status" value="1"/>
</dbReference>
<dbReference type="SUPFAM" id="SSF50447">
    <property type="entry name" value="Translation proteins"/>
    <property type="match status" value="1"/>
</dbReference>
<dbReference type="PROSITE" id="PS00301">
    <property type="entry name" value="G_TR_1"/>
    <property type="match status" value="1"/>
</dbReference>
<dbReference type="PROSITE" id="PS51722">
    <property type="entry name" value="G_TR_2"/>
    <property type="match status" value="1"/>
</dbReference>
<comment type="function">
    <text evidence="1">Required for accurate and efficient protein synthesis under certain stress conditions. May act as a fidelity factor of the translation reaction, by catalyzing a one-codon backward translocation of tRNAs on improperly translocated ribosomes. Back-translocation proceeds from a post-translocation (POST) complex to a pre-translocation (PRE) complex, thus giving elongation factor G a second chance to translocate the tRNAs correctly. Binds to ribosomes in a GTP-dependent manner.</text>
</comment>
<comment type="catalytic activity">
    <reaction evidence="1">
        <text>GTP + H2O = GDP + phosphate + H(+)</text>
        <dbReference type="Rhea" id="RHEA:19669"/>
        <dbReference type="ChEBI" id="CHEBI:15377"/>
        <dbReference type="ChEBI" id="CHEBI:15378"/>
        <dbReference type="ChEBI" id="CHEBI:37565"/>
        <dbReference type="ChEBI" id="CHEBI:43474"/>
        <dbReference type="ChEBI" id="CHEBI:58189"/>
        <dbReference type="EC" id="3.6.5.n1"/>
    </reaction>
</comment>
<comment type="subcellular location">
    <subcellularLocation>
        <location evidence="1">Cell membrane</location>
        <topology evidence="1">Peripheral membrane protein</topology>
        <orientation evidence="1">Cytoplasmic side</orientation>
    </subcellularLocation>
</comment>
<comment type="similarity">
    <text evidence="1">Belongs to the TRAFAC class translation factor GTPase superfamily. Classic translation factor GTPase family. LepA subfamily.</text>
</comment>
<sequence>MSPMARTAPVPAATDPAIIRNFCIIAHIDHGKSTLADRMLQSTGVVQARDMKAQYLDRMDIERERGITIKSQAVRMPWEVEGVSYALNMIDTPGHVDFTYEVSRSLAACEGAILLVDAAQGIEAQTLANLYLAMENNLTIIPVLNKIDLPAAQPEKYAAELASLIGGDPEDVLRVSGKTGVGVEALLDKIVRDLPAPEGNPDAPARAMIFDSVYDTYRGVVTYVRVVDGMLHPRERIQMMSTRASHELLEIGVSSPEPTPSKGLGVGEVGYLITGVKDVRQSKVGDTVTNLAKPAAQSLPGYADAKPMVFSGLYPLDGADYPVLRDALEKLMLNDAALVYEPETSAALGFGFRVGFLGLLHLEITRERLEREYNLDLISTAPNVEYEVTLEDKKVVRVTNPSEYPTGKIAEVREPMVSATILAPNEFVGAIMELCQSRRGVMGGMDYLSEDRVEIRYRLPLAEIVFDFFDILKSKTRGYGSLDWKADGEQVADLVKVDIMLQGEQVDAFSAITHREKAYAYGVMMTGKLRELIPRQQFEVPIQAAIGSRIIARESIRAIRKDVLAKCYGGDISRKRKLLEKQKEGKKRMKMVGTVEVPQEAFIAALTTDESKDKAKKK</sequence>
<proteinExistence type="inferred from homology"/>
<reference key="1">
    <citation type="submission" date="2009-01" db="EMBL/GenBank/DDBJ databases">
        <title>Complete sequence of chromosome of Arthrobacter chlorophenolicus A6.</title>
        <authorList>
            <consortium name="US DOE Joint Genome Institute"/>
            <person name="Lucas S."/>
            <person name="Copeland A."/>
            <person name="Lapidus A."/>
            <person name="Glavina del Rio T."/>
            <person name="Tice H."/>
            <person name="Bruce D."/>
            <person name="Goodwin L."/>
            <person name="Pitluck S."/>
            <person name="Goltsman E."/>
            <person name="Clum A."/>
            <person name="Larimer F."/>
            <person name="Land M."/>
            <person name="Hauser L."/>
            <person name="Kyrpides N."/>
            <person name="Mikhailova N."/>
            <person name="Jansson J."/>
            <person name="Richardson P."/>
        </authorList>
    </citation>
    <scope>NUCLEOTIDE SEQUENCE [LARGE SCALE GENOMIC DNA]</scope>
    <source>
        <strain>ATCC 700700 / DSM 12829 / CIP 107037 / JCM 12360 / KCTC 9906 / NCIMB 13794 / A6</strain>
    </source>
</reference>
<keyword id="KW-1003">Cell membrane</keyword>
<keyword id="KW-0342">GTP-binding</keyword>
<keyword id="KW-0378">Hydrolase</keyword>
<keyword id="KW-0472">Membrane</keyword>
<keyword id="KW-0547">Nucleotide-binding</keyword>
<keyword id="KW-0648">Protein biosynthesis</keyword>